<keyword id="KW-1185">Reference proteome</keyword>
<keyword id="KW-0808">Transferase</keyword>
<organism>
    <name type="scientific">Pestalotiopsis fici (strain W106-1 / CGMCC3.15140)</name>
    <dbReference type="NCBI Taxonomy" id="1229662"/>
    <lineage>
        <taxon>Eukaryota</taxon>
        <taxon>Fungi</taxon>
        <taxon>Dikarya</taxon>
        <taxon>Ascomycota</taxon>
        <taxon>Pezizomycotina</taxon>
        <taxon>Sordariomycetes</taxon>
        <taxon>Xylariomycetidae</taxon>
        <taxon>Amphisphaeriales</taxon>
        <taxon>Sporocadaceae</taxon>
        <taxon>Pestalotiopsis</taxon>
    </lineage>
</organism>
<dbReference type="EC" id="2.5.1.-" evidence="2"/>
<dbReference type="EMBL" id="KU963195">
    <property type="protein sequence ID" value="APC57597.1"/>
    <property type="molecule type" value="Genomic_DNA"/>
</dbReference>
<dbReference type="EMBL" id="KI912110">
    <property type="protein sequence ID" value="ETS86017.1"/>
    <property type="molecule type" value="Genomic_DNA"/>
</dbReference>
<dbReference type="RefSeq" id="XP_007830814.1">
    <property type="nucleotide sequence ID" value="XM_007832623.1"/>
</dbReference>
<dbReference type="SMR" id="A0A1J0HSL6"/>
<dbReference type="GeneID" id="19269055"/>
<dbReference type="KEGG" id="pfy:PFICI_04042"/>
<dbReference type="eggNOG" id="ENOG502S2XP">
    <property type="taxonomic scope" value="Eukaryota"/>
</dbReference>
<dbReference type="HOGENOM" id="CLU_037431_0_0_1"/>
<dbReference type="InParanoid" id="A0A1J0HSL6"/>
<dbReference type="OMA" id="HERLWWA"/>
<dbReference type="OrthoDB" id="5392033at2759"/>
<dbReference type="Proteomes" id="UP000030651">
    <property type="component" value="Unassembled WGS sequence"/>
</dbReference>
<dbReference type="GO" id="GO:0016765">
    <property type="term" value="F:transferase activity, transferring alkyl or aryl (other than methyl) groups"/>
    <property type="evidence" value="ECO:0007669"/>
    <property type="project" value="InterPro"/>
</dbReference>
<dbReference type="GO" id="GO:0009820">
    <property type="term" value="P:alkaloid metabolic process"/>
    <property type="evidence" value="ECO:0007669"/>
    <property type="project" value="InterPro"/>
</dbReference>
<dbReference type="CDD" id="cd13929">
    <property type="entry name" value="PT-DMATS_CymD"/>
    <property type="match status" value="1"/>
</dbReference>
<dbReference type="InterPro" id="IPR033964">
    <property type="entry name" value="Aro_prenylTrfase"/>
</dbReference>
<dbReference type="InterPro" id="IPR017795">
    <property type="entry name" value="Aro_prenylTrfase_DMATS"/>
</dbReference>
<dbReference type="InterPro" id="IPR012148">
    <property type="entry name" value="DMATS-type_fun"/>
</dbReference>
<dbReference type="NCBIfam" id="TIGR03429">
    <property type="entry name" value="arom_pren_DMATS"/>
    <property type="match status" value="1"/>
</dbReference>
<dbReference type="PANTHER" id="PTHR40627">
    <property type="entry name" value="INDOLE PRENYLTRANSFERASE TDIB-RELATED"/>
    <property type="match status" value="1"/>
</dbReference>
<dbReference type="PANTHER" id="PTHR40627:SF4">
    <property type="entry name" value="PRENYLTRANSFERASE ASQH1-RELATED"/>
    <property type="match status" value="1"/>
</dbReference>
<dbReference type="Pfam" id="PF11991">
    <property type="entry name" value="Trp_DMAT"/>
    <property type="match status" value="1"/>
</dbReference>
<dbReference type="PIRSF" id="PIRSF000509">
    <property type="entry name" value="Trp_DMAT"/>
    <property type="match status" value="1"/>
</dbReference>
<dbReference type="SFLD" id="SFLDS00036">
    <property type="entry name" value="Aromatic_Prenyltransferase"/>
    <property type="match status" value="1"/>
</dbReference>
<dbReference type="SFLD" id="SFLDG01162">
    <property type="entry name" value="I"/>
    <property type="match status" value="1"/>
</dbReference>
<name>IACE_PESFW</name>
<reference key="1">
    <citation type="journal article" date="2018" name="ACS Chem. Biol.">
        <title>Characterization of a prenyltransferase for iso-A82775C biosynthesis and generation of new congeners of chloropestolides.</title>
        <authorList>
            <person name="Pan Y."/>
            <person name="Liu L."/>
            <person name="Guan F."/>
            <person name="Li E."/>
            <person name="Jin J."/>
            <person name="Li J."/>
            <person name="Che Y."/>
            <person name="Liu G."/>
        </authorList>
    </citation>
    <scope>NUCLEOTIDE SEQUENCE [GENOMIC DNA]</scope>
    <scope>FUNCTION</scope>
    <scope>DISRUPTION PHENOTYPE</scope>
    <scope>CATALYTIC ACTIVITY</scope>
    <scope>SUBSTRATE SPECIFICITY</scope>
    <scope>BIOPHYSICOCHEMICAL PROPERTIES</scope>
    <scope>INDUCTION</scope>
    <scope>PATHWAY</scope>
    <scope>BIOTECHNOLOGY</scope>
    <source>
        <strain>W106-1 / CGMCC3.15140</strain>
    </source>
</reference>
<reference key="2">
    <citation type="journal article" date="2015" name="BMC Genomics">
        <title>Genomic and transcriptomic analysis of the endophytic fungus Pestalotiopsis fici reveals its lifestyle and high potential for synthesis of natural products.</title>
        <authorList>
            <person name="Wang X."/>
            <person name="Zhang X."/>
            <person name="Liu L."/>
            <person name="Xiang M."/>
            <person name="Wang W."/>
            <person name="Sun X."/>
            <person name="Che Y."/>
            <person name="Guo L."/>
            <person name="Liu G."/>
            <person name="Guo L."/>
            <person name="Wang C."/>
            <person name="Yin W.B."/>
            <person name="Stadler M."/>
            <person name="Zhang X."/>
            <person name="Liu X."/>
        </authorList>
    </citation>
    <scope>NUCLEOTIDE SEQUENCE [LARGE SCALE GENOMIC DNA]</scope>
    <source>
        <strain>W106-1 / CGMCC3.15140</strain>
    </source>
</reference>
<evidence type="ECO:0000250" key="1">
    <source>
        <dbReference type="UniProtKB" id="Q50EL0"/>
    </source>
</evidence>
<evidence type="ECO:0000269" key="2">
    <source>
    </source>
</evidence>
<evidence type="ECO:0000303" key="3">
    <source>
    </source>
</evidence>
<evidence type="ECO:0000305" key="4"/>
<evidence type="ECO:0000305" key="5">
    <source>
    </source>
</evidence>
<comment type="function">
    <text evidence="2 5">Prenyltransferase; part of the gene cluster that mediates the biosynthesis of iso-A82775C, a enylepoxycyclohexane and biosynthetic precursor of the chloropestolide anticancer natural products (PubMed:29384350). Within the cluster, the prenyltransferase iacE prenylates siccayne to generate pestalodiol E, using dimethylallyl diphosphate (DMAPP) as cosubstrate (PubMed:29384350). The probable oxidoreductase iacF is then involved in the epoxidation of pestalodiol F to pestalodiol F, which is further converted to pestalofone A by the short-chain dehydrogenase/reductase iacG (PubMed:29384350). Iso-A82775C is subsequently generated from pestalofone A by the short-chain dehydrogenase/reductase iacC (PubMed:29384350). Iso-A82775C is further condensed with maldoxin via a Diels-Alder reaction to produce the anticancer natural products chloropestolides A to E (Probable).</text>
</comment>
<comment type="catalytic activity">
    <reaction evidence="2">
        <text>siccayne + dimethylallyl diphosphate = pestalodiol + diphosphate</text>
        <dbReference type="Rhea" id="RHEA:65064"/>
        <dbReference type="ChEBI" id="CHEBI:33019"/>
        <dbReference type="ChEBI" id="CHEBI:57623"/>
        <dbReference type="ChEBI" id="CHEBI:156304"/>
        <dbReference type="ChEBI" id="CHEBI:156305"/>
    </reaction>
    <physiologicalReaction direction="left-to-right" evidence="2">
        <dbReference type="Rhea" id="RHEA:65065"/>
    </physiologicalReaction>
</comment>
<comment type="biophysicochemical properties">
    <kinetics>
        <KM evidence="2">46.25 uM for siccayne</KM>
        <KM evidence="2">34.52 uM for DMAPP</KM>
        <Vmax evidence="2">358.0 pmol/sec/mg enzyme</Vmax>
    </kinetics>
</comment>
<comment type="pathway">
    <text evidence="2">Secondary metabolite biosynthesis.</text>
</comment>
<comment type="induction">
    <text evidence="2">Expression is co-regulated with the other genes from the iso-A82775C biosynthesis cluster and probably controlled by the cluster-specific transcription factors iacI and iacK.</text>
</comment>
<comment type="disruption phenotype">
    <text evidence="2">Abolishes the production of iso-A82775C, but accumulates siccayne as well as chloropestolides H to K.</text>
</comment>
<comment type="biotechnology">
    <text evidence="2">Iso-A82775C is a precursor for the biosynthesis of the anticancer natural products chloropestolides A to E via a Diesls-Alder reaction with maldoxin (PubMed:29384350). In the absence of the prenyltransferase iacE, siccayne accumulates instead of iso-A82775C and can also be condensed with maldoxin to produce chloropestolides H to K, which show also antibacterial and anticancer properties (PubMed:29384350).</text>
</comment>
<comment type="similarity">
    <text evidence="4">Belongs to the tryptophan dimethylallyltransferase family.</text>
</comment>
<feature type="chain" id="PRO_0000451377" description="Prenyltransferase iacE">
    <location>
        <begin position="1"/>
        <end position="439"/>
    </location>
</feature>
<feature type="binding site" evidence="1">
    <location>
        <begin position="88"/>
        <end position="89"/>
    </location>
    <ligand>
        <name>substrate</name>
    </ligand>
</feature>
<feature type="binding site" evidence="1">
    <location>
        <position position="97"/>
    </location>
    <ligand>
        <name>substrate</name>
    </ligand>
</feature>
<feature type="binding site" evidence="1">
    <location>
        <position position="112"/>
    </location>
    <ligand>
        <name>substrate</name>
    </ligand>
</feature>
<feature type="binding site" evidence="1">
    <location>
        <position position="198"/>
    </location>
    <ligand>
        <name>substrate</name>
    </ligand>
</feature>
<feature type="binding site" evidence="1">
    <location>
        <position position="200"/>
    </location>
    <ligand>
        <name>substrate</name>
    </ligand>
</feature>
<feature type="binding site" evidence="1">
    <location>
        <position position="271"/>
    </location>
    <ligand>
        <name>substrate</name>
    </ligand>
</feature>
<feature type="binding site" evidence="1">
    <location>
        <position position="273"/>
    </location>
    <ligand>
        <name>substrate</name>
    </ligand>
</feature>
<feature type="binding site" evidence="1">
    <location>
        <position position="275"/>
    </location>
    <ligand>
        <name>substrate</name>
    </ligand>
</feature>
<protein>
    <recommendedName>
        <fullName evidence="3">Prenyltransferase iacE</fullName>
        <ecNumber evidence="2">2.5.1.-</ecNumber>
    </recommendedName>
    <alternativeName>
        <fullName evidence="3">Iso-A82775C biosynthesis cluster protein E</fullName>
    </alternativeName>
</protein>
<proteinExistence type="evidence at protein level"/>
<sequence>MAISTPSNGVSHVAKPLPNLKEVNKGIETDSEDRAFWWGALSEPLASLLEANHYTKEVQLHYLRWFYQWILPALGPRPLDGKPYYGSWITHDLSPFEYSLNWKEKSSKQTIRFTIEAVTKQSGTASDPINQLGAKEFLEAVSKDVPGMDLTRFNQFLEATNVPNDCVDDAIAKHPAHFPRSRVWIAFDLEHSGNLMAKSYFLPHWRAIQSGISANTIIGDTVKECNKADGSSYDGSLNAIESYLATFTRPEEAPQMGLLSNDCVAETPGSRLKVYFRSSADTLAKAKDMYNLGGRLKGPKMDASLKGISDFWYHLFGLDSSDPASDDKVCIGNHKCIFVYEMRSSQGSEPDIDVKFHIPMWQLGKTDGQISELLASWFESHGHPDLASRYKSDLGTAFPKHNITGKSVGTHTYISITHTPKTGLYMTMYLSPKLPEFYY</sequence>
<gene>
    <name evidence="3" type="primary">iacE</name>
    <name type="ORF">PFICI_04042</name>
</gene>
<accession>A0A1J0HSL6</accession>
<accession>W3XKM4</accession>